<gene>
    <name evidence="1" type="primary">pheS</name>
    <name type="ordered locus">BAD_0928</name>
</gene>
<keyword id="KW-0030">Aminoacyl-tRNA synthetase</keyword>
<keyword id="KW-0067">ATP-binding</keyword>
<keyword id="KW-0963">Cytoplasm</keyword>
<keyword id="KW-0436">Ligase</keyword>
<keyword id="KW-0460">Magnesium</keyword>
<keyword id="KW-0479">Metal-binding</keyword>
<keyword id="KW-0547">Nucleotide-binding</keyword>
<keyword id="KW-0648">Protein biosynthesis</keyword>
<keyword id="KW-1185">Reference proteome</keyword>
<protein>
    <recommendedName>
        <fullName evidence="1">Phenylalanine--tRNA ligase alpha subunit</fullName>
        <ecNumber evidence="1">6.1.1.20</ecNumber>
    </recommendedName>
    <alternativeName>
        <fullName evidence="1">Phenylalanyl-tRNA synthetase alpha subunit</fullName>
        <shortName evidence="1">PheRS</shortName>
    </alternativeName>
</protein>
<evidence type="ECO:0000255" key="1">
    <source>
        <dbReference type="HAMAP-Rule" id="MF_00281"/>
    </source>
</evidence>
<accession>A1A1X6</accession>
<dbReference type="EC" id="6.1.1.20" evidence="1"/>
<dbReference type="EMBL" id="AP009256">
    <property type="protein sequence ID" value="BAF39709.1"/>
    <property type="molecule type" value="Genomic_DNA"/>
</dbReference>
<dbReference type="RefSeq" id="WP_003810298.1">
    <property type="nucleotide sequence ID" value="NZ_CAXVNC010000005.1"/>
</dbReference>
<dbReference type="SMR" id="A1A1X6"/>
<dbReference type="STRING" id="367928.BAD_0928"/>
<dbReference type="PaxDb" id="1680-BADO_0993"/>
<dbReference type="GeneID" id="4556529"/>
<dbReference type="KEGG" id="bad:BAD_0928"/>
<dbReference type="HOGENOM" id="CLU_025086_0_0_11"/>
<dbReference type="Proteomes" id="UP000008702">
    <property type="component" value="Chromosome"/>
</dbReference>
<dbReference type="GO" id="GO:0005737">
    <property type="term" value="C:cytoplasm"/>
    <property type="evidence" value="ECO:0007669"/>
    <property type="project" value="UniProtKB-SubCell"/>
</dbReference>
<dbReference type="GO" id="GO:0005524">
    <property type="term" value="F:ATP binding"/>
    <property type="evidence" value="ECO:0007669"/>
    <property type="project" value="UniProtKB-UniRule"/>
</dbReference>
<dbReference type="GO" id="GO:0000287">
    <property type="term" value="F:magnesium ion binding"/>
    <property type="evidence" value="ECO:0007669"/>
    <property type="project" value="UniProtKB-UniRule"/>
</dbReference>
<dbReference type="GO" id="GO:0004826">
    <property type="term" value="F:phenylalanine-tRNA ligase activity"/>
    <property type="evidence" value="ECO:0007669"/>
    <property type="project" value="UniProtKB-UniRule"/>
</dbReference>
<dbReference type="GO" id="GO:0000049">
    <property type="term" value="F:tRNA binding"/>
    <property type="evidence" value="ECO:0007669"/>
    <property type="project" value="InterPro"/>
</dbReference>
<dbReference type="GO" id="GO:0006432">
    <property type="term" value="P:phenylalanyl-tRNA aminoacylation"/>
    <property type="evidence" value="ECO:0007669"/>
    <property type="project" value="UniProtKB-UniRule"/>
</dbReference>
<dbReference type="CDD" id="cd00496">
    <property type="entry name" value="PheRS_alpha_core"/>
    <property type="match status" value="1"/>
</dbReference>
<dbReference type="Gene3D" id="3.30.930.10">
    <property type="entry name" value="Bira Bifunctional Protein, Domain 2"/>
    <property type="match status" value="1"/>
</dbReference>
<dbReference type="HAMAP" id="MF_00281">
    <property type="entry name" value="Phe_tRNA_synth_alpha1"/>
    <property type="match status" value="1"/>
</dbReference>
<dbReference type="InterPro" id="IPR006195">
    <property type="entry name" value="aa-tRNA-synth_II"/>
</dbReference>
<dbReference type="InterPro" id="IPR045864">
    <property type="entry name" value="aa-tRNA-synth_II/BPL/LPL"/>
</dbReference>
<dbReference type="InterPro" id="IPR004529">
    <property type="entry name" value="Phe-tRNA-synth_IIc_asu"/>
</dbReference>
<dbReference type="InterPro" id="IPR004188">
    <property type="entry name" value="Phe-tRNA_ligase_II_N"/>
</dbReference>
<dbReference type="InterPro" id="IPR022911">
    <property type="entry name" value="Phe_tRNA_ligase_alpha1_bac"/>
</dbReference>
<dbReference type="InterPro" id="IPR002319">
    <property type="entry name" value="Phenylalanyl-tRNA_Synthase"/>
</dbReference>
<dbReference type="InterPro" id="IPR010978">
    <property type="entry name" value="tRNA-bd_arm"/>
</dbReference>
<dbReference type="NCBIfam" id="TIGR00468">
    <property type="entry name" value="pheS"/>
    <property type="match status" value="1"/>
</dbReference>
<dbReference type="PANTHER" id="PTHR11538:SF41">
    <property type="entry name" value="PHENYLALANINE--TRNA LIGASE, MITOCHONDRIAL"/>
    <property type="match status" value="1"/>
</dbReference>
<dbReference type="PANTHER" id="PTHR11538">
    <property type="entry name" value="PHENYLALANYL-TRNA SYNTHETASE"/>
    <property type="match status" value="1"/>
</dbReference>
<dbReference type="Pfam" id="PF02912">
    <property type="entry name" value="Phe_tRNA-synt_N"/>
    <property type="match status" value="1"/>
</dbReference>
<dbReference type="Pfam" id="PF01409">
    <property type="entry name" value="tRNA-synt_2d"/>
    <property type="match status" value="1"/>
</dbReference>
<dbReference type="SUPFAM" id="SSF55681">
    <property type="entry name" value="Class II aaRS and biotin synthetases"/>
    <property type="match status" value="1"/>
</dbReference>
<dbReference type="SUPFAM" id="SSF46589">
    <property type="entry name" value="tRNA-binding arm"/>
    <property type="match status" value="1"/>
</dbReference>
<dbReference type="PROSITE" id="PS50862">
    <property type="entry name" value="AA_TRNA_LIGASE_II"/>
    <property type="match status" value="1"/>
</dbReference>
<reference key="1">
    <citation type="submission" date="2006-12" db="EMBL/GenBank/DDBJ databases">
        <title>Bifidobacterium adolescentis complete genome sequence.</title>
        <authorList>
            <person name="Suzuki T."/>
            <person name="Tsuda Y."/>
            <person name="Kanou N."/>
            <person name="Inoue T."/>
            <person name="Kumazaki K."/>
            <person name="Nagano S."/>
            <person name="Hirai S."/>
            <person name="Tanaka K."/>
            <person name="Watanabe K."/>
        </authorList>
    </citation>
    <scope>NUCLEOTIDE SEQUENCE [LARGE SCALE GENOMIC DNA]</scope>
    <source>
        <strain>ATCC 15703 / DSM 20083 / NCTC 11814 / E194a</strain>
    </source>
</reference>
<comment type="catalytic activity">
    <reaction evidence="1">
        <text>tRNA(Phe) + L-phenylalanine + ATP = L-phenylalanyl-tRNA(Phe) + AMP + diphosphate + H(+)</text>
        <dbReference type="Rhea" id="RHEA:19413"/>
        <dbReference type="Rhea" id="RHEA-COMP:9668"/>
        <dbReference type="Rhea" id="RHEA-COMP:9699"/>
        <dbReference type="ChEBI" id="CHEBI:15378"/>
        <dbReference type="ChEBI" id="CHEBI:30616"/>
        <dbReference type="ChEBI" id="CHEBI:33019"/>
        <dbReference type="ChEBI" id="CHEBI:58095"/>
        <dbReference type="ChEBI" id="CHEBI:78442"/>
        <dbReference type="ChEBI" id="CHEBI:78531"/>
        <dbReference type="ChEBI" id="CHEBI:456215"/>
        <dbReference type="EC" id="6.1.1.20"/>
    </reaction>
</comment>
<comment type="cofactor">
    <cofactor evidence="1">
        <name>Mg(2+)</name>
        <dbReference type="ChEBI" id="CHEBI:18420"/>
    </cofactor>
    <text evidence="1">Binds 2 magnesium ions per tetramer.</text>
</comment>
<comment type="subunit">
    <text evidence="1">Tetramer of two alpha and two beta subunits.</text>
</comment>
<comment type="subcellular location">
    <subcellularLocation>
        <location evidence="1">Cytoplasm</location>
    </subcellularLocation>
</comment>
<comment type="similarity">
    <text evidence="1">Belongs to the class-II aminoacyl-tRNA synthetase family. Phe-tRNA synthetase alpha subunit type 1 subfamily.</text>
</comment>
<name>SYFA_BIFAA</name>
<feature type="chain" id="PRO_1000006801" description="Phenylalanine--tRNA ligase alpha subunit">
    <location>
        <begin position="1"/>
        <end position="355"/>
    </location>
</feature>
<feature type="binding site" evidence="1">
    <location>
        <position position="273"/>
    </location>
    <ligand>
        <name>Mg(2+)</name>
        <dbReference type="ChEBI" id="CHEBI:18420"/>
        <note>shared with beta subunit</note>
    </ligand>
</feature>
<proteinExistence type="inferred from homology"/>
<organism>
    <name type="scientific">Bifidobacterium adolescentis (strain ATCC 15703 / DSM 20083 / NCTC 11814 / E194a)</name>
    <dbReference type="NCBI Taxonomy" id="367928"/>
    <lineage>
        <taxon>Bacteria</taxon>
        <taxon>Bacillati</taxon>
        <taxon>Actinomycetota</taxon>
        <taxon>Actinomycetes</taxon>
        <taxon>Bifidobacteriales</taxon>
        <taxon>Bifidobacteriaceae</taxon>
        <taxon>Bifidobacterium</taxon>
    </lineage>
</organism>
<sequence>MAEGAVFDAQAVTDAVAEGIAKIENASTMEELKAIKTQYAGAESAMTQASKAIGALPKDQKKDAGKLMGKLRADFGRAFGTKEKQVKAEEEARELAAETVDMTLPVNRKPLGARHPLPKLMEDVEDFFISMGWQISDGPEVETEWYDFDALNFGPDHPARQMQDTFYVKGNQAKDAAGFVGSNMVLRTQTSSDQVRGLITRGVPLYIACPGRVFRTDELDATHTPVFHQVEALAVDKHLTMADLKGVLDKLAVAMFGPEAKTRLRPSYFPFTEPSAELDLWFPDKKGGAGWLEWGGCGMVNPNVLKSAGLDPEVYTGFAFGVGVERTLLLRHDINDMHDLVEGDVRFSEQFVMGE</sequence>